<feature type="chain" id="PRO_0000431883" description="Inositol polyphosphate multikinase IPK2">
    <location>
        <begin position="1"/>
        <end position="295"/>
    </location>
</feature>
<feature type="region of interest" description="Disordered" evidence="2">
    <location>
        <begin position="1"/>
        <end position="21"/>
    </location>
</feature>
<dbReference type="EC" id="2.7.1.140" evidence="5"/>
<dbReference type="EC" id="2.7.1.151" evidence="5"/>
<dbReference type="EMBL" id="AY529102">
    <property type="protein sequence ID" value="AAS93936.1"/>
    <property type="molecule type" value="mRNA"/>
</dbReference>
<dbReference type="EMBL" id="AP004772">
    <property type="protein sequence ID" value="BAD25378.1"/>
    <property type="molecule type" value="Genomic_DNA"/>
</dbReference>
<dbReference type="EMBL" id="AP005749">
    <property type="protein sequence ID" value="BAD26154.1"/>
    <property type="molecule type" value="Genomic_DNA"/>
</dbReference>
<dbReference type="EMBL" id="AP008208">
    <property type="protein sequence ID" value="BAF08900.1"/>
    <property type="molecule type" value="Genomic_DNA"/>
</dbReference>
<dbReference type="EMBL" id="AP014958">
    <property type="protein sequence ID" value="BAS78971.1"/>
    <property type="molecule type" value="Genomic_DNA"/>
</dbReference>
<dbReference type="EMBL" id="CM000139">
    <property type="protein sequence ID" value="EAZ23262.1"/>
    <property type="molecule type" value="Genomic_DNA"/>
</dbReference>
<dbReference type="RefSeq" id="XP_015623153.1">
    <property type="nucleotide sequence ID" value="XM_015767667.1"/>
</dbReference>
<dbReference type="SMR" id="Q6H545"/>
<dbReference type="FunCoup" id="Q6H545">
    <property type="interactions" value="1065"/>
</dbReference>
<dbReference type="STRING" id="39947.Q6H545"/>
<dbReference type="PaxDb" id="39947-Q6H545"/>
<dbReference type="EnsemblPlants" id="Os02t0523800-01">
    <property type="protein sequence ID" value="Os02t0523800-01"/>
    <property type="gene ID" value="Os02g0523800"/>
</dbReference>
<dbReference type="Gramene" id="Os02t0523800-01">
    <property type="protein sequence ID" value="Os02t0523800-01"/>
    <property type="gene ID" value="Os02g0523800"/>
</dbReference>
<dbReference type="KEGG" id="dosa:Os02g0523800"/>
<dbReference type="eggNOG" id="KOG1620">
    <property type="taxonomic scope" value="Eukaryota"/>
</dbReference>
<dbReference type="HOGENOM" id="CLU_042569_1_2_1"/>
<dbReference type="InParanoid" id="Q6H545"/>
<dbReference type="OMA" id="DCAFAAT"/>
<dbReference type="OrthoDB" id="5958943at2759"/>
<dbReference type="PlantReactome" id="R-OSA-1119434">
    <property type="pathway name" value="Phytic acid biosynthesis (lipid-independent)"/>
</dbReference>
<dbReference type="Proteomes" id="UP000000763">
    <property type="component" value="Chromosome 2"/>
</dbReference>
<dbReference type="Proteomes" id="UP000007752">
    <property type="component" value="Chromosome 2"/>
</dbReference>
<dbReference type="Proteomes" id="UP000059680">
    <property type="component" value="Chromosome 2"/>
</dbReference>
<dbReference type="GO" id="GO:0005737">
    <property type="term" value="C:cytoplasm"/>
    <property type="evidence" value="ECO:0000318"/>
    <property type="project" value="GO_Central"/>
</dbReference>
<dbReference type="GO" id="GO:0005634">
    <property type="term" value="C:nucleus"/>
    <property type="evidence" value="ECO:0000318"/>
    <property type="project" value="GO_Central"/>
</dbReference>
<dbReference type="GO" id="GO:0005524">
    <property type="term" value="F:ATP binding"/>
    <property type="evidence" value="ECO:0007669"/>
    <property type="project" value="UniProtKB-KW"/>
</dbReference>
<dbReference type="GO" id="GO:0051765">
    <property type="term" value="F:inositol tetrakisphosphate kinase activity"/>
    <property type="evidence" value="ECO:0000318"/>
    <property type="project" value="GO_Central"/>
</dbReference>
<dbReference type="GO" id="GO:0047326">
    <property type="term" value="F:inositol-1,3,4,6-tetrakisphosphate 5-kinase activity"/>
    <property type="evidence" value="ECO:0007669"/>
    <property type="project" value="RHEA"/>
</dbReference>
<dbReference type="GO" id="GO:0008440">
    <property type="term" value="F:inositol-1,4,5-trisphosphate 3-kinase activity"/>
    <property type="evidence" value="ECO:0000318"/>
    <property type="project" value="GO_Central"/>
</dbReference>
<dbReference type="GO" id="GO:0032958">
    <property type="term" value="P:inositol phosphate biosynthetic process"/>
    <property type="evidence" value="ECO:0000318"/>
    <property type="project" value="GO_Central"/>
</dbReference>
<dbReference type="Gene3D" id="3.30.470.160">
    <property type="entry name" value="Inositol polyphosphate kinase"/>
    <property type="match status" value="1"/>
</dbReference>
<dbReference type="InterPro" id="IPR005522">
    <property type="entry name" value="IPK"/>
</dbReference>
<dbReference type="InterPro" id="IPR038286">
    <property type="entry name" value="IPK_sf"/>
</dbReference>
<dbReference type="PANTHER" id="PTHR12400">
    <property type="entry name" value="INOSITOL POLYPHOSPHATE KINASE"/>
    <property type="match status" value="1"/>
</dbReference>
<dbReference type="PANTHER" id="PTHR12400:SF51">
    <property type="entry name" value="INOSITOL POLYPHOSPHATE MULTIKINASE"/>
    <property type="match status" value="1"/>
</dbReference>
<dbReference type="Pfam" id="PF03770">
    <property type="entry name" value="IPK"/>
    <property type="match status" value="1"/>
</dbReference>
<dbReference type="SUPFAM" id="SSF56104">
    <property type="entry name" value="SAICAR synthase-like"/>
    <property type="match status" value="1"/>
</dbReference>
<accession>Q6H545</accession>
<accession>A0A0P0VJQ8</accession>
<organism>
    <name type="scientific">Oryza sativa subsp. japonica</name>
    <name type="common">Rice</name>
    <dbReference type="NCBI Taxonomy" id="39947"/>
    <lineage>
        <taxon>Eukaryota</taxon>
        <taxon>Viridiplantae</taxon>
        <taxon>Streptophyta</taxon>
        <taxon>Embryophyta</taxon>
        <taxon>Tracheophyta</taxon>
        <taxon>Spermatophyta</taxon>
        <taxon>Magnoliopsida</taxon>
        <taxon>Liliopsida</taxon>
        <taxon>Poales</taxon>
        <taxon>Poaceae</taxon>
        <taxon>BOP clade</taxon>
        <taxon>Oryzoideae</taxon>
        <taxon>Oryzeae</taxon>
        <taxon>Oryzinae</taxon>
        <taxon>Oryza</taxon>
        <taxon>Oryza sativa</taxon>
    </lineage>
</organism>
<keyword id="KW-0067">ATP-binding</keyword>
<keyword id="KW-0418">Kinase</keyword>
<keyword id="KW-0547">Nucleotide-binding</keyword>
<keyword id="KW-1185">Reference proteome</keyword>
<keyword id="KW-0808">Transferase</keyword>
<protein>
    <recommendedName>
        <fullName evidence="5">Inositol polyphosphate multikinase IPK2</fullName>
        <shortName evidence="4">OsIPK2</shortName>
        <ecNumber evidence="5">2.7.1.140</ecNumber>
        <ecNumber evidence="5">2.7.1.151</ecNumber>
    </recommendedName>
    <alternativeName>
        <fullName>Inositol polyphosphate 6-/3-/5-kinase</fullName>
    </alternativeName>
</protein>
<evidence type="ECO:0000250" key="1">
    <source>
        <dbReference type="UniProtKB" id="Q9LY23"/>
    </source>
</evidence>
<evidence type="ECO:0000256" key="2">
    <source>
        <dbReference type="SAM" id="MobiDB-lite"/>
    </source>
</evidence>
<evidence type="ECO:0000269" key="3">
    <source>
    </source>
</evidence>
<evidence type="ECO:0000303" key="4">
    <source>
    </source>
</evidence>
<evidence type="ECO:0000305" key="5"/>
<evidence type="ECO:0000312" key="6">
    <source>
        <dbReference type="EMBL" id="BAD25378.1"/>
    </source>
</evidence>
<evidence type="ECO:0000312" key="7">
    <source>
        <dbReference type="EMBL" id="BAD26154.1"/>
    </source>
</evidence>
<evidence type="ECO:0000312" key="8">
    <source>
        <dbReference type="EMBL" id="BAF08900.1"/>
    </source>
</evidence>
<evidence type="ECO:0000312" key="9">
    <source>
        <dbReference type="EMBL" id="EAZ23262.1"/>
    </source>
</evidence>
<reference key="1">
    <citation type="submission" date="2004-01" db="EMBL/GenBank/DDBJ databases">
        <title>Isolation and identification of inositol polyphosphate kinase gene from Oryza sativa.</title>
        <authorList>
            <person name="Zhou T."/>
            <person name="Zhang Z.-B."/>
            <person name="Xia H.-J."/>
        </authorList>
    </citation>
    <scope>NUCLEOTIDE SEQUENCE [MRNA]</scope>
</reference>
<reference key="2">
    <citation type="journal article" date="2005" name="Nature">
        <title>The map-based sequence of the rice genome.</title>
        <authorList>
            <consortium name="International rice genome sequencing project (IRGSP)"/>
        </authorList>
    </citation>
    <scope>NUCLEOTIDE SEQUENCE [LARGE SCALE GENOMIC DNA]</scope>
    <source>
        <strain>cv. Nipponbare</strain>
    </source>
</reference>
<reference key="3">
    <citation type="journal article" date="2008" name="Nucleic Acids Res.">
        <title>The rice annotation project database (RAP-DB): 2008 update.</title>
        <authorList>
            <consortium name="The rice annotation project (RAP)"/>
        </authorList>
    </citation>
    <scope>GENOME REANNOTATION</scope>
    <source>
        <strain>cv. Nipponbare</strain>
    </source>
</reference>
<reference key="4">
    <citation type="journal article" date="2013" name="Rice">
        <title>Improvement of the Oryza sativa Nipponbare reference genome using next generation sequence and optical map data.</title>
        <authorList>
            <person name="Kawahara Y."/>
            <person name="de la Bastide M."/>
            <person name="Hamilton J.P."/>
            <person name="Kanamori H."/>
            <person name="McCombie W.R."/>
            <person name="Ouyang S."/>
            <person name="Schwartz D.C."/>
            <person name="Tanaka T."/>
            <person name="Wu J."/>
            <person name="Zhou S."/>
            <person name="Childs K.L."/>
            <person name="Davidson R.M."/>
            <person name="Lin H."/>
            <person name="Quesada-Ocampo L."/>
            <person name="Vaillancourt B."/>
            <person name="Sakai H."/>
            <person name="Lee S.S."/>
            <person name="Kim J."/>
            <person name="Numa H."/>
            <person name="Itoh T."/>
            <person name="Buell C.R."/>
            <person name="Matsumoto T."/>
        </authorList>
    </citation>
    <scope>GENOME REANNOTATION</scope>
    <source>
        <strain>cv. Nipponbare</strain>
    </source>
</reference>
<reference key="5">
    <citation type="journal article" date="2005" name="PLoS Biol.">
        <title>The genomes of Oryza sativa: a history of duplications.</title>
        <authorList>
            <person name="Yu J."/>
            <person name="Wang J."/>
            <person name="Lin W."/>
            <person name="Li S."/>
            <person name="Li H."/>
            <person name="Zhou J."/>
            <person name="Ni P."/>
            <person name="Dong W."/>
            <person name="Hu S."/>
            <person name="Zeng C."/>
            <person name="Zhang J."/>
            <person name="Zhang Y."/>
            <person name="Li R."/>
            <person name="Xu Z."/>
            <person name="Li S."/>
            <person name="Li X."/>
            <person name="Zheng H."/>
            <person name="Cong L."/>
            <person name="Lin L."/>
            <person name="Yin J."/>
            <person name="Geng J."/>
            <person name="Li G."/>
            <person name="Shi J."/>
            <person name="Liu J."/>
            <person name="Lv H."/>
            <person name="Li J."/>
            <person name="Wang J."/>
            <person name="Deng Y."/>
            <person name="Ran L."/>
            <person name="Shi X."/>
            <person name="Wang X."/>
            <person name="Wu Q."/>
            <person name="Li C."/>
            <person name="Ren X."/>
            <person name="Wang J."/>
            <person name="Wang X."/>
            <person name="Li D."/>
            <person name="Liu D."/>
            <person name="Zhang X."/>
            <person name="Ji Z."/>
            <person name="Zhao W."/>
            <person name="Sun Y."/>
            <person name="Zhang Z."/>
            <person name="Bao J."/>
            <person name="Han Y."/>
            <person name="Dong L."/>
            <person name="Ji J."/>
            <person name="Chen P."/>
            <person name="Wu S."/>
            <person name="Liu J."/>
            <person name="Xiao Y."/>
            <person name="Bu D."/>
            <person name="Tan J."/>
            <person name="Yang L."/>
            <person name="Ye C."/>
            <person name="Zhang J."/>
            <person name="Xu J."/>
            <person name="Zhou Y."/>
            <person name="Yu Y."/>
            <person name="Zhang B."/>
            <person name="Zhuang S."/>
            <person name="Wei H."/>
            <person name="Liu B."/>
            <person name="Lei M."/>
            <person name="Yu H."/>
            <person name="Li Y."/>
            <person name="Xu H."/>
            <person name="Wei S."/>
            <person name="He X."/>
            <person name="Fang L."/>
            <person name="Zhang Z."/>
            <person name="Zhang Y."/>
            <person name="Huang X."/>
            <person name="Su Z."/>
            <person name="Tong W."/>
            <person name="Li J."/>
            <person name="Tong Z."/>
            <person name="Li S."/>
            <person name="Ye J."/>
            <person name="Wang L."/>
            <person name="Fang L."/>
            <person name="Lei T."/>
            <person name="Chen C.-S."/>
            <person name="Chen H.-C."/>
            <person name="Xu Z."/>
            <person name="Li H."/>
            <person name="Huang H."/>
            <person name="Zhang F."/>
            <person name="Xu H."/>
            <person name="Li N."/>
            <person name="Zhao C."/>
            <person name="Li S."/>
            <person name="Dong L."/>
            <person name="Huang Y."/>
            <person name="Li L."/>
            <person name="Xi Y."/>
            <person name="Qi Q."/>
            <person name="Li W."/>
            <person name="Zhang B."/>
            <person name="Hu W."/>
            <person name="Zhang Y."/>
            <person name="Tian X."/>
            <person name="Jiao Y."/>
            <person name="Liang X."/>
            <person name="Jin J."/>
            <person name="Gao L."/>
            <person name="Zheng W."/>
            <person name="Hao B."/>
            <person name="Liu S.-M."/>
            <person name="Wang W."/>
            <person name="Yuan L."/>
            <person name="Cao M."/>
            <person name="McDermott J."/>
            <person name="Samudrala R."/>
            <person name="Wang J."/>
            <person name="Wong G.K.-S."/>
            <person name="Yang H."/>
        </authorList>
    </citation>
    <scope>NUCLEOTIDE SEQUENCE [LARGE SCALE GENOMIC DNA]</scope>
    <source>
        <strain>cv. Nipponbare</strain>
    </source>
</reference>
<reference key="6">
    <citation type="journal article" date="2007" name="Gene">
        <title>Expression pattern of inositol phosphate-related enzymes in rice (Oryza sativa L.): implications for the phytic acid biosynthetic pathway.</title>
        <authorList>
            <person name="Suzuki M."/>
            <person name="Tanaka K."/>
            <person name="Kuwano M."/>
            <person name="Yoshida K.T."/>
        </authorList>
    </citation>
    <scope>TISSUE SPECIFICITY</scope>
</reference>
<name>IPK2_ORYSJ</name>
<gene>
    <name evidence="4" type="primary">IPK2</name>
    <name evidence="8" type="ordered locus">Os02g0523800</name>
    <name evidence="5" type="ordered locus">LOC_Os02g32370</name>
    <name evidence="9" type="ORF">OsJ_06957</name>
    <name evidence="7" type="ORF">OSJNBa0047A17.37</name>
    <name evidence="6" type="ORF">P0415B12.9</name>
</gene>
<sequence length="295" mass="31029">MASDLRPPEHQVAGHRASADKLGPLVDGEGLFYKPLQAGERGEHEAAFYAAFTAHPAVPPRVRGAFFPRFHGTRFLPAPASPGGAPYPHIVLDDLLAGLPSPCVADVKIGACTWPPRSPDPYVAKCLAKDRETTSALLGFRVSGVRVVDARGGAVWRPDRSELKGIDAAGVRRVLRRYVSTGGGDGLDCALAAAVYGGEGGVLAQLRELKAWFEEQTLYHFYSASILFGYDANAAAAAAPGGGSGGVRVKLVDFAHVDDGDGVIDHNFLGGLCSLIKFIGDIVAEVTEKASSDHS</sequence>
<proteinExistence type="evidence at transcript level"/>
<comment type="function">
    <text evidence="1">Inositol phosphate kinase with a broad substrate specificity. Phosphorylates inositol 1,4,5-trisphosphate (Ins(1,4,5)P3), inositol 1,4,5,6-tetrakisphosphate (Ins(1,4,5,6)P4), inositol 1,3,4,5-tetrakisphosphate (Ins(1,3,4,5)P4), inositol 1,3,4,6-tetrakisphosphate (Ins(1,3,4,6)P4) and inositol 1,2,3,4,6-pentakisphosphate (Ins(1,2,3,4,6)P5) but not inositol 1,4-bisphosphate (Ins(1,4)P2), inositol 1,3,4-trisphosphate (Ins(1,3,4)P3), inositol 1,2,6-trisphosphate (Ins(1,2,6)P3), inositol 3,4,5,6-tetrakisphosphate (Ins(3,4,5,6)P4), inositol 1,3,4,5,6-pentakisphosphate (Ins(1,3,4,5,6)P5), inositol 1,2,4,5,6-pentakisphosphate (Ins(1,2,4,5,6)P5) or inositol hexakisphosphate (InsP6). Regulates pollen and root development probably through the regulation of InsP3-mediated calcium accumulation.</text>
</comment>
<comment type="catalytic activity">
    <reaction evidence="1">
        <text>1D-myo-inositol 1,4,5-trisphosphate + 2 ATP = 1D-myo-inositol 1,3,4,5,6-pentakisphosphate + 2 ADP + 2 H(+)</text>
        <dbReference type="Rhea" id="RHEA:32359"/>
        <dbReference type="ChEBI" id="CHEBI:15378"/>
        <dbReference type="ChEBI" id="CHEBI:30616"/>
        <dbReference type="ChEBI" id="CHEBI:57733"/>
        <dbReference type="ChEBI" id="CHEBI:203600"/>
        <dbReference type="ChEBI" id="CHEBI:456216"/>
        <dbReference type="EC" id="2.7.1.151"/>
    </reaction>
</comment>
<comment type="catalytic activity">
    <reaction evidence="1">
        <text>1D-myo-inositol 1,3,4,6-tetrakisphosphate + ATP = 1D-myo-inositol 1,3,4,5,6-pentakisphosphate + ADP + H(+)</text>
        <dbReference type="Rhea" id="RHEA:12717"/>
        <dbReference type="ChEBI" id="CHEBI:15378"/>
        <dbReference type="ChEBI" id="CHEBI:30616"/>
        <dbReference type="ChEBI" id="CHEBI:57660"/>
        <dbReference type="ChEBI" id="CHEBI:57733"/>
        <dbReference type="ChEBI" id="CHEBI:456216"/>
        <dbReference type="EC" id="2.7.1.140"/>
    </reaction>
</comment>
<comment type="tissue specificity">
    <text evidence="3">Highly expressed in anthers and at lower levels in roots, leaves, flowers and embryos.</text>
</comment>
<comment type="similarity">
    <text evidence="5">Belongs to the inositol phosphokinase (IPK) family.</text>
</comment>